<reference key="1">
    <citation type="submission" date="2003-10" db="EMBL/GenBank/DDBJ databases">
        <title>The complete genome sequence of the alkaliphilic Bacillus clausii KSM-K16.</title>
        <authorList>
            <person name="Takaki Y."/>
            <person name="Kageyama Y."/>
            <person name="Shimamura S."/>
            <person name="Suzuki H."/>
            <person name="Nishi S."/>
            <person name="Hatada Y."/>
            <person name="Kawai S."/>
            <person name="Ito S."/>
            <person name="Horikoshi K."/>
        </authorList>
    </citation>
    <scope>NUCLEOTIDE SEQUENCE [LARGE SCALE GENOMIC DNA]</scope>
    <source>
        <strain>KSM-K16</strain>
    </source>
</reference>
<keyword id="KW-0963">Cytoplasm</keyword>
<keyword id="KW-0285">Flavoprotein</keyword>
<keyword id="KW-0288">FMN</keyword>
<keyword id="KW-0520">NAD</keyword>
<keyword id="KW-0560">Oxidoreductase</keyword>
<keyword id="KW-0665">Pyrimidine biosynthesis</keyword>
<keyword id="KW-1185">Reference proteome</keyword>
<protein>
    <recommendedName>
        <fullName>Dihydroorotate dehydrogenase B (NAD(+)), catalytic subunit</fullName>
        <shortName>DHOD B</shortName>
        <shortName>DHODase B</shortName>
        <shortName>DHOdehase B</shortName>
        <ecNumber>1.3.1.14</ecNumber>
    </recommendedName>
    <alternativeName>
        <fullName>Dihydroorotate oxidase B</fullName>
    </alternativeName>
    <alternativeName>
        <fullName>Orotate reductase (NADH)</fullName>
    </alternativeName>
</protein>
<proteinExistence type="inferred from homology"/>
<dbReference type="EC" id="1.3.1.14"/>
<dbReference type="EMBL" id="AP006627">
    <property type="protein sequence ID" value="BAD64866.1"/>
    <property type="molecule type" value="Genomic_DNA"/>
</dbReference>
<dbReference type="RefSeq" id="WP_011247174.1">
    <property type="nucleotide sequence ID" value="NC_006582.1"/>
</dbReference>
<dbReference type="SMR" id="Q5WFJ4"/>
<dbReference type="STRING" id="66692.ABC2331"/>
<dbReference type="KEGG" id="bcl:ABC2331"/>
<dbReference type="eggNOG" id="COG0167">
    <property type="taxonomic scope" value="Bacteria"/>
</dbReference>
<dbReference type="HOGENOM" id="CLU_042042_0_0_9"/>
<dbReference type="OrthoDB" id="9794954at2"/>
<dbReference type="UniPathway" id="UPA00070">
    <property type="reaction ID" value="UER00945"/>
</dbReference>
<dbReference type="Proteomes" id="UP000001168">
    <property type="component" value="Chromosome"/>
</dbReference>
<dbReference type="GO" id="GO:0005737">
    <property type="term" value="C:cytoplasm"/>
    <property type="evidence" value="ECO:0007669"/>
    <property type="project" value="UniProtKB-SubCell"/>
</dbReference>
<dbReference type="GO" id="GO:0004589">
    <property type="term" value="F:dihydroorotate dehydrogenase (NAD+) activity"/>
    <property type="evidence" value="ECO:0007669"/>
    <property type="project" value="UniProtKB-EC"/>
</dbReference>
<dbReference type="GO" id="GO:0006207">
    <property type="term" value="P:'de novo' pyrimidine nucleobase biosynthetic process"/>
    <property type="evidence" value="ECO:0007669"/>
    <property type="project" value="InterPro"/>
</dbReference>
<dbReference type="GO" id="GO:0044205">
    <property type="term" value="P:'de novo' UMP biosynthetic process"/>
    <property type="evidence" value="ECO:0007669"/>
    <property type="project" value="UniProtKB-UniRule"/>
</dbReference>
<dbReference type="CDD" id="cd04740">
    <property type="entry name" value="DHOD_1B_like"/>
    <property type="match status" value="1"/>
</dbReference>
<dbReference type="FunFam" id="3.20.20.70:FF:000069">
    <property type="entry name" value="Dihydroorotate dehydrogenase"/>
    <property type="match status" value="1"/>
</dbReference>
<dbReference type="Gene3D" id="3.20.20.70">
    <property type="entry name" value="Aldolase class I"/>
    <property type="match status" value="1"/>
</dbReference>
<dbReference type="HAMAP" id="MF_00224">
    <property type="entry name" value="DHO_dh_type1"/>
    <property type="match status" value="1"/>
</dbReference>
<dbReference type="InterPro" id="IPR013785">
    <property type="entry name" value="Aldolase_TIM"/>
</dbReference>
<dbReference type="InterPro" id="IPR050074">
    <property type="entry name" value="DHO_dehydrogenase"/>
</dbReference>
<dbReference type="InterPro" id="IPR033888">
    <property type="entry name" value="DHOD_1B"/>
</dbReference>
<dbReference type="InterPro" id="IPR024920">
    <property type="entry name" value="Dihydroorotate_DH_1"/>
</dbReference>
<dbReference type="InterPro" id="IPR012135">
    <property type="entry name" value="Dihydroorotate_DH_1_2"/>
</dbReference>
<dbReference type="InterPro" id="IPR005720">
    <property type="entry name" value="Dihydroorotate_DH_cat"/>
</dbReference>
<dbReference type="InterPro" id="IPR001295">
    <property type="entry name" value="Dihydroorotate_DH_CS"/>
</dbReference>
<dbReference type="InterPro" id="IPR049622">
    <property type="entry name" value="Dihydroorotate_DH_I"/>
</dbReference>
<dbReference type="NCBIfam" id="NF005574">
    <property type="entry name" value="PRK07259.1"/>
    <property type="match status" value="1"/>
</dbReference>
<dbReference type="NCBIfam" id="TIGR01037">
    <property type="entry name" value="pyrD_sub1_fam"/>
    <property type="match status" value="1"/>
</dbReference>
<dbReference type="PANTHER" id="PTHR48109:SF1">
    <property type="entry name" value="DIHYDROOROTATE DEHYDROGENASE (FUMARATE)"/>
    <property type="match status" value="1"/>
</dbReference>
<dbReference type="PANTHER" id="PTHR48109">
    <property type="entry name" value="DIHYDROOROTATE DEHYDROGENASE (QUINONE), MITOCHONDRIAL-RELATED"/>
    <property type="match status" value="1"/>
</dbReference>
<dbReference type="Pfam" id="PF01180">
    <property type="entry name" value="DHO_dh"/>
    <property type="match status" value="1"/>
</dbReference>
<dbReference type="PIRSF" id="PIRSF000164">
    <property type="entry name" value="DHO_oxidase"/>
    <property type="match status" value="1"/>
</dbReference>
<dbReference type="SUPFAM" id="SSF51395">
    <property type="entry name" value="FMN-linked oxidoreductases"/>
    <property type="match status" value="1"/>
</dbReference>
<dbReference type="PROSITE" id="PS00911">
    <property type="entry name" value="DHODEHASE_1"/>
    <property type="match status" value="1"/>
</dbReference>
<dbReference type="PROSITE" id="PS00912">
    <property type="entry name" value="DHODEHASE_2"/>
    <property type="match status" value="1"/>
</dbReference>
<feature type="chain" id="PRO_1000024130" description="Dihydroorotate dehydrogenase B (NAD(+)), catalytic subunit">
    <location>
        <begin position="1"/>
        <end position="304"/>
    </location>
</feature>
<feature type="active site" description="Nucleophile">
    <location>
        <position position="130"/>
    </location>
</feature>
<feature type="binding site" evidence="1">
    <location>
        <position position="21"/>
    </location>
    <ligand>
        <name>FMN</name>
        <dbReference type="ChEBI" id="CHEBI:58210"/>
    </ligand>
</feature>
<feature type="binding site" evidence="1">
    <location>
        <begin position="45"/>
        <end position="46"/>
    </location>
    <ligand>
        <name>FMN</name>
        <dbReference type="ChEBI" id="CHEBI:58210"/>
    </ligand>
</feature>
<feature type="binding site" evidence="1">
    <location>
        <position position="45"/>
    </location>
    <ligand>
        <name>substrate</name>
    </ligand>
</feature>
<feature type="binding site" evidence="1">
    <location>
        <begin position="69"/>
        <end position="73"/>
    </location>
    <ligand>
        <name>substrate</name>
    </ligand>
</feature>
<feature type="binding site" evidence="1">
    <location>
        <position position="99"/>
    </location>
    <ligand>
        <name>FMN</name>
        <dbReference type="ChEBI" id="CHEBI:58210"/>
    </ligand>
</feature>
<feature type="binding site" evidence="1">
    <location>
        <position position="127"/>
    </location>
    <ligand>
        <name>FMN</name>
        <dbReference type="ChEBI" id="CHEBI:58210"/>
    </ligand>
</feature>
<feature type="binding site" evidence="1">
    <location>
        <position position="127"/>
    </location>
    <ligand>
        <name>substrate</name>
    </ligand>
</feature>
<feature type="binding site" evidence="1">
    <location>
        <position position="165"/>
    </location>
    <ligand>
        <name>FMN</name>
        <dbReference type="ChEBI" id="CHEBI:58210"/>
    </ligand>
</feature>
<feature type="binding site" evidence="1">
    <location>
        <position position="191"/>
    </location>
    <ligand>
        <name>FMN</name>
        <dbReference type="ChEBI" id="CHEBI:58210"/>
    </ligand>
</feature>
<feature type="binding site" evidence="1">
    <location>
        <begin position="192"/>
        <end position="193"/>
    </location>
    <ligand>
        <name>substrate</name>
    </ligand>
</feature>
<feature type="binding site" evidence="1">
    <location>
        <position position="217"/>
    </location>
    <ligand>
        <name>FMN</name>
        <dbReference type="ChEBI" id="CHEBI:58210"/>
    </ligand>
</feature>
<feature type="binding site" evidence="1">
    <location>
        <begin position="243"/>
        <end position="244"/>
    </location>
    <ligand>
        <name>FMN</name>
        <dbReference type="ChEBI" id="CHEBI:58210"/>
    </ligand>
</feature>
<feature type="binding site" evidence="1">
    <location>
        <begin position="265"/>
        <end position="266"/>
    </location>
    <ligand>
        <name>FMN</name>
        <dbReference type="ChEBI" id="CHEBI:58210"/>
    </ligand>
</feature>
<sequence length="304" mass="32447">MERLQISLPGLEMKNPVMPASGCFGFGKEYGQFFDLNQLGAIAIKATTKEARFGNETPRVAETKAGMLNAIGLQNPGLQGVIEQELPRFDDYDVPILANIAGSTMDDYIEVAAELSQQRNVSAIELNISCPNVKQGGIAFGTVPEIAAELTKEVKAVSAVPVYVKLSPNVADIVAIAKAIEKAGADGLAMINTLLGMRIDAKTRRPVLANQYGGLSGAAIKPVALRMIHQVSQQVDIPIIGMGGIQTAEDVIEFLLAGASCIAVGTANFTDPYTCPNIIRDLPHWLDRLEVQSITDLIGGSWNE</sequence>
<evidence type="ECO:0000250" key="1"/>
<evidence type="ECO:0000305" key="2"/>
<accession>Q5WFJ4</accession>
<organism>
    <name type="scientific">Shouchella clausii (strain KSM-K16)</name>
    <name type="common">Alkalihalobacillus clausii</name>
    <dbReference type="NCBI Taxonomy" id="66692"/>
    <lineage>
        <taxon>Bacteria</taxon>
        <taxon>Bacillati</taxon>
        <taxon>Bacillota</taxon>
        <taxon>Bacilli</taxon>
        <taxon>Bacillales</taxon>
        <taxon>Bacillaceae</taxon>
        <taxon>Shouchella</taxon>
    </lineage>
</organism>
<gene>
    <name type="primary">pyrD</name>
    <name type="ordered locus">ABC2331</name>
</gene>
<name>PYRDB_SHOC1</name>
<comment type="function">
    <text evidence="1">Catalyzes the conversion of dihydroorotate to orotate with NAD(+) as electron acceptor.</text>
</comment>
<comment type="catalytic activity">
    <reaction>
        <text>(S)-dihydroorotate + NAD(+) = orotate + NADH + H(+)</text>
        <dbReference type="Rhea" id="RHEA:13513"/>
        <dbReference type="ChEBI" id="CHEBI:15378"/>
        <dbReference type="ChEBI" id="CHEBI:30839"/>
        <dbReference type="ChEBI" id="CHEBI:30864"/>
        <dbReference type="ChEBI" id="CHEBI:57540"/>
        <dbReference type="ChEBI" id="CHEBI:57945"/>
        <dbReference type="EC" id="1.3.1.14"/>
    </reaction>
</comment>
<comment type="cofactor">
    <cofactor evidence="1">
        <name>FMN</name>
        <dbReference type="ChEBI" id="CHEBI:58210"/>
    </cofactor>
    <text evidence="1">Binds 1 FMN per subunit.</text>
</comment>
<comment type="pathway">
    <text>Pyrimidine metabolism; UMP biosynthesis via de novo pathway; orotate from (S)-dihydroorotate (NAD(+) route): step 1/1.</text>
</comment>
<comment type="subunit">
    <text evidence="1">Heterotetramer of 2 PyrK and 2 PyrD type B subunits.</text>
</comment>
<comment type="subcellular location">
    <subcellularLocation>
        <location evidence="1">Cytoplasm</location>
    </subcellularLocation>
</comment>
<comment type="similarity">
    <text evidence="2">Belongs to the dihydroorotate dehydrogenase family. Type 1 subfamily.</text>
</comment>